<proteinExistence type="evidence at transcript level"/>
<protein>
    <recommendedName>
        <fullName>Probable WRKY transcription factor 48</fullName>
    </recommendedName>
    <alternativeName>
        <fullName>WRKY DNA-binding protein 48</fullName>
    </alternativeName>
</protein>
<keyword id="KW-0238">DNA-binding</keyword>
<keyword id="KW-0539">Nucleus</keyword>
<keyword id="KW-1185">Reference proteome</keyword>
<keyword id="KW-0804">Transcription</keyword>
<keyword id="KW-0805">Transcription regulation</keyword>
<name>WRK48_ARATH</name>
<comment type="function">
    <text evidence="1">Transcription factor. Interacts specifically with the W box (5'-(T)TGAC[CT]-3'), a frequently occurring elicitor-responsive cis-acting element (By similarity).</text>
</comment>
<comment type="subcellular location">
    <subcellularLocation>
        <location evidence="2">Nucleus</location>
    </subcellularLocation>
</comment>
<sequence length="399" mass="44726">MEKKKEEDHHHQQQQQQQKEIKNTETKIEQEQEQEQKQEISQASSSSNMANLVTSSDHHPLELAGNLSSIFDTSSLPFPYSYFEDHSSNNPNSFLDLLRQDHQFASSSNSSSFSFDAFPLPNNNNNTSFFTDLPLPQAESSEVVNTTPTSPNSTSVSSSSNEAANDNNSGKEVTVKDQEEGDQQQEQKGTKPQLKAKKKNQKKAREARFAFLTKSDIDNLDDGYRWRKYGQKAVKNSPYPRSYYRCTTVGCGVKKRVERSSDDPSIVMTTYEGQHTHPFPMTPRGHIGMLTSPILDHGATTASSSSFSIPQPRYLLTQHHQPYNMYNNNSLSMINRRSSDGTFVNPGPSSSFPGFGYDMSQASTSTSSSIRDHGLLQDILPSQIRSDTINTQTNEENKK</sequence>
<accession>Q9FGZ4</accession>
<evidence type="ECO:0000250" key="1"/>
<evidence type="ECO:0000255" key="2">
    <source>
        <dbReference type="PROSITE-ProRule" id="PRU00223"/>
    </source>
</evidence>
<evidence type="ECO:0000256" key="3">
    <source>
        <dbReference type="SAM" id="MobiDB-lite"/>
    </source>
</evidence>
<gene>
    <name type="primary">WRKY48</name>
    <name type="ordered locus">At5g49520</name>
    <name type="ORF">K6M13.6</name>
</gene>
<dbReference type="EMBL" id="AF442397">
    <property type="protein sequence ID" value="AAL35290.1"/>
    <property type="molecule type" value="mRNA"/>
</dbReference>
<dbReference type="EMBL" id="AB023033">
    <property type="protein sequence ID" value="BAB10765.1"/>
    <property type="molecule type" value="Genomic_DNA"/>
</dbReference>
<dbReference type="EMBL" id="CP002688">
    <property type="protein sequence ID" value="AED95824.1"/>
    <property type="molecule type" value="Genomic_DNA"/>
</dbReference>
<dbReference type="EMBL" id="AY063870">
    <property type="protein sequence ID" value="AAL36226.1"/>
    <property type="molecule type" value="mRNA"/>
</dbReference>
<dbReference type="EMBL" id="AY091224">
    <property type="protein sequence ID" value="AAM14163.1"/>
    <property type="molecule type" value="mRNA"/>
</dbReference>
<dbReference type="RefSeq" id="NP_199763.1">
    <property type="nucleotide sequence ID" value="NM_124329.3"/>
</dbReference>
<dbReference type="SMR" id="Q9FGZ4"/>
<dbReference type="FunCoup" id="Q9FGZ4">
    <property type="interactions" value="19"/>
</dbReference>
<dbReference type="IntAct" id="Q9FGZ4">
    <property type="interactions" value="1"/>
</dbReference>
<dbReference type="STRING" id="3702.Q9FGZ4"/>
<dbReference type="PaxDb" id="3702-AT5G49520.1"/>
<dbReference type="ProteomicsDB" id="232455"/>
<dbReference type="EnsemblPlants" id="AT5G49520.1">
    <property type="protein sequence ID" value="AT5G49520.1"/>
    <property type="gene ID" value="AT5G49520"/>
</dbReference>
<dbReference type="GeneID" id="835012"/>
<dbReference type="Gramene" id="AT5G49520.1">
    <property type="protein sequence ID" value="AT5G49520.1"/>
    <property type="gene ID" value="AT5G49520"/>
</dbReference>
<dbReference type="KEGG" id="ath:AT5G49520"/>
<dbReference type="Araport" id="AT5G49520"/>
<dbReference type="TAIR" id="AT5G49520">
    <property type="gene designation" value="WRKY48"/>
</dbReference>
<dbReference type="eggNOG" id="ENOG502QU0Y">
    <property type="taxonomic scope" value="Eukaryota"/>
</dbReference>
<dbReference type="HOGENOM" id="CLU_033779_1_0_1"/>
<dbReference type="InParanoid" id="Q9FGZ4"/>
<dbReference type="OMA" id="GQHSHPF"/>
<dbReference type="PRO" id="PR:Q9FGZ4"/>
<dbReference type="Proteomes" id="UP000006548">
    <property type="component" value="Chromosome 5"/>
</dbReference>
<dbReference type="ExpressionAtlas" id="Q9FGZ4">
    <property type="expression patterns" value="baseline and differential"/>
</dbReference>
<dbReference type="GO" id="GO:0005634">
    <property type="term" value="C:nucleus"/>
    <property type="evidence" value="ECO:0000314"/>
    <property type="project" value="TAIR"/>
</dbReference>
<dbReference type="GO" id="GO:0003677">
    <property type="term" value="F:DNA binding"/>
    <property type="evidence" value="ECO:0000314"/>
    <property type="project" value="TAIR"/>
</dbReference>
<dbReference type="GO" id="GO:0003700">
    <property type="term" value="F:DNA-binding transcription factor activity"/>
    <property type="evidence" value="ECO:0000250"/>
    <property type="project" value="TAIR"/>
</dbReference>
<dbReference type="GO" id="GO:0000976">
    <property type="term" value="F:transcription cis-regulatory region binding"/>
    <property type="evidence" value="ECO:0000353"/>
    <property type="project" value="TAIR"/>
</dbReference>
<dbReference type="GO" id="GO:0042742">
    <property type="term" value="P:defense response to bacterium"/>
    <property type="evidence" value="ECO:0000315"/>
    <property type="project" value="TAIR"/>
</dbReference>
<dbReference type="GO" id="GO:0045893">
    <property type="term" value="P:positive regulation of DNA-templated transcription"/>
    <property type="evidence" value="ECO:0000314"/>
    <property type="project" value="TAIR"/>
</dbReference>
<dbReference type="GO" id="GO:0009617">
    <property type="term" value="P:response to bacterium"/>
    <property type="evidence" value="ECO:0000270"/>
    <property type="project" value="TAIR"/>
</dbReference>
<dbReference type="FunFam" id="2.20.25.80:FF:000003">
    <property type="entry name" value="WRKY transcription factor 57"/>
    <property type="match status" value="1"/>
</dbReference>
<dbReference type="Gene3D" id="2.20.25.80">
    <property type="entry name" value="WRKY domain"/>
    <property type="match status" value="1"/>
</dbReference>
<dbReference type="InterPro" id="IPR003657">
    <property type="entry name" value="WRKY_dom"/>
</dbReference>
<dbReference type="InterPro" id="IPR036576">
    <property type="entry name" value="WRKY_dom_sf"/>
</dbReference>
<dbReference type="InterPro" id="IPR044810">
    <property type="entry name" value="WRKY_plant"/>
</dbReference>
<dbReference type="PANTHER" id="PTHR31221:SF350">
    <property type="entry name" value="WRKY TRANSCRIPTION FACTOR 48-RELATED"/>
    <property type="match status" value="1"/>
</dbReference>
<dbReference type="PANTHER" id="PTHR31221">
    <property type="entry name" value="WRKY TRANSCRIPTION FACTOR PROTEIN 1-RELATED"/>
    <property type="match status" value="1"/>
</dbReference>
<dbReference type="Pfam" id="PF03106">
    <property type="entry name" value="WRKY"/>
    <property type="match status" value="1"/>
</dbReference>
<dbReference type="SMART" id="SM00774">
    <property type="entry name" value="WRKY"/>
    <property type="match status" value="1"/>
</dbReference>
<dbReference type="SUPFAM" id="SSF118290">
    <property type="entry name" value="WRKY DNA-binding domain"/>
    <property type="match status" value="1"/>
</dbReference>
<dbReference type="PROSITE" id="PS50811">
    <property type="entry name" value="WRKY"/>
    <property type="match status" value="1"/>
</dbReference>
<reference key="1">
    <citation type="submission" date="2001-10" db="EMBL/GenBank/DDBJ databases">
        <title>Arabidopsis thaliana transcription factor WRKY48.</title>
        <authorList>
            <person name="Ulker B."/>
            <person name="Kushnir S."/>
            <person name="Somssich I.E."/>
        </authorList>
    </citation>
    <scope>NUCLEOTIDE SEQUENCE [MRNA]</scope>
    <source>
        <strain>cv. Columbia</strain>
        <tissue>Flower</tissue>
    </source>
</reference>
<reference key="2">
    <citation type="journal article" date="2000" name="DNA Res.">
        <title>Structural analysis of Arabidopsis thaliana chromosome 5. X. Sequence features of the regions of 3,076,755 bp covered by sixty P1 and TAC clones.</title>
        <authorList>
            <person name="Sato S."/>
            <person name="Nakamura Y."/>
            <person name="Kaneko T."/>
            <person name="Katoh T."/>
            <person name="Asamizu E."/>
            <person name="Kotani H."/>
            <person name="Tabata S."/>
        </authorList>
    </citation>
    <scope>NUCLEOTIDE SEQUENCE [LARGE SCALE GENOMIC DNA]</scope>
    <source>
        <strain>cv. Columbia</strain>
    </source>
</reference>
<reference key="3">
    <citation type="journal article" date="2017" name="Plant J.">
        <title>Araport11: a complete reannotation of the Arabidopsis thaliana reference genome.</title>
        <authorList>
            <person name="Cheng C.Y."/>
            <person name="Krishnakumar V."/>
            <person name="Chan A.P."/>
            <person name="Thibaud-Nissen F."/>
            <person name="Schobel S."/>
            <person name="Town C.D."/>
        </authorList>
    </citation>
    <scope>GENOME REANNOTATION</scope>
    <source>
        <strain>cv. Columbia</strain>
    </source>
</reference>
<reference key="4">
    <citation type="journal article" date="2003" name="Science">
        <title>Empirical analysis of transcriptional activity in the Arabidopsis genome.</title>
        <authorList>
            <person name="Yamada K."/>
            <person name="Lim J."/>
            <person name="Dale J.M."/>
            <person name="Chen H."/>
            <person name="Shinn P."/>
            <person name="Palm C.J."/>
            <person name="Southwick A.M."/>
            <person name="Wu H.C."/>
            <person name="Kim C.J."/>
            <person name="Nguyen M."/>
            <person name="Pham P.K."/>
            <person name="Cheuk R.F."/>
            <person name="Karlin-Newmann G."/>
            <person name="Liu S.X."/>
            <person name="Lam B."/>
            <person name="Sakano H."/>
            <person name="Wu T."/>
            <person name="Yu G."/>
            <person name="Miranda M."/>
            <person name="Quach H.L."/>
            <person name="Tripp M."/>
            <person name="Chang C.H."/>
            <person name="Lee J.M."/>
            <person name="Toriumi M.J."/>
            <person name="Chan M.M."/>
            <person name="Tang C.C."/>
            <person name="Onodera C.S."/>
            <person name="Deng J.M."/>
            <person name="Akiyama K."/>
            <person name="Ansari Y."/>
            <person name="Arakawa T."/>
            <person name="Banh J."/>
            <person name="Banno F."/>
            <person name="Bowser L."/>
            <person name="Brooks S.Y."/>
            <person name="Carninci P."/>
            <person name="Chao Q."/>
            <person name="Choy N."/>
            <person name="Enju A."/>
            <person name="Goldsmith A.D."/>
            <person name="Gurjal M."/>
            <person name="Hansen N.F."/>
            <person name="Hayashizaki Y."/>
            <person name="Johnson-Hopson C."/>
            <person name="Hsuan V.W."/>
            <person name="Iida K."/>
            <person name="Karnes M."/>
            <person name="Khan S."/>
            <person name="Koesema E."/>
            <person name="Ishida J."/>
            <person name="Jiang P.X."/>
            <person name="Jones T."/>
            <person name="Kawai J."/>
            <person name="Kamiya A."/>
            <person name="Meyers C."/>
            <person name="Nakajima M."/>
            <person name="Narusaka M."/>
            <person name="Seki M."/>
            <person name="Sakurai T."/>
            <person name="Satou M."/>
            <person name="Tamse R."/>
            <person name="Vaysberg M."/>
            <person name="Wallender E.K."/>
            <person name="Wong C."/>
            <person name="Yamamura Y."/>
            <person name="Yuan S."/>
            <person name="Shinozaki K."/>
            <person name="Davis R.W."/>
            <person name="Theologis A."/>
            <person name="Ecker J.R."/>
        </authorList>
    </citation>
    <scope>NUCLEOTIDE SEQUENCE [LARGE SCALE MRNA]</scope>
    <source>
        <strain>cv. Columbia</strain>
    </source>
</reference>
<organism>
    <name type="scientific">Arabidopsis thaliana</name>
    <name type="common">Mouse-ear cress</name>
    <dbReference type="NCBI Taxonomy" id="3702"/>
    <lineage>
        <taxon>Eukaryota</taxon>
        <taxon>Viridiplantae</taxon>
        <taxon>Streptophyta</taxon>
        <taxon>Embryophyta</taxon>
        <taxon>Tracheophyta</taxon>
        <taxon>Spermatophyta</taxon>
        <taxon>Magnoliopsida</taxon>
        <taxon>eudicotyledons</taxon>
        <taxon>Gunneridae</taxon>
        <taxon>Pentapetalae</taxon>
        <taxon>rosids</taxon>
        <taxon>malvids</taxon>
        <taxon>Brassicales</taxon>
        <taxon>Brassicaceae</taxon>
        <taxon>Camelineae</taxon>
        <taxon>Arabidopsis</taxon>
    </lineage>
</organism>
<feature type="chain" id="PRO_0000133689" description="Probable WRKY transcription factor 48">
    <location>
        <begin position="1"/>
        <end position="399"/>
    </location>
</feature>
<feature type="DNA-binding region" description="WRKY" evidence="2">
    <location>
        <begin position="215"/>
        <end position="280"/>
    </location>
</feature>
<feature type="region of interest" description="Disordered" evidence="3">
    <location>
        <begin position="1"/>
        <end position="57"/>
    </location>
</feature>
<feature type="region of interest" description="Disordered" evidence="3">
    <location>
        <begin position="138"/>
        <end position="202"/>
    </location>
</feature>
<feature type="region of interest" description="Disordered" evidence="3">
    <location>
        <begin position="361"/>
        <end position="399"/>
    </location>
</feature>
<feature type="compositionally biased region" description="Basic and acidic residues" evidence="3">
    <location>
        <begin position="1"/>
        <end position="11"/>
    </location>
</feature>
<feature type="compositionally biased region" description="Basic and acidic residues" evidence="3">
    <location>
        <begin position="19"/>
        <end position="38"/>
    </location>
</feature>
<feature type="compositionally biased region" description="Low complexity" evidence="3">
    <location>
        <begin position="143"/>
        <end position="161"/>
    </location>
</feature>
<feature type="compositionally biased region" description="Polar residues" evidence="3">
    <location>
        <begin position="162"/>
        <end position="171"/>
    </location>
</feature>
<feature type="compositionally biased region" description="Low complexity" evidence="3">
    <location>
        <begin position="184"/>
        <end position="193"/>
    </location>
</feature>
<feature type="compositionally biased region" description="Polar residues" evidence="3">
    <location>
        <begin position="383"/>
        <end position="399"/>
    </location>
</feature>